<evidence type="ECO:0000250" key="1"/>
<evidence type="ECO:0000250" key="2">
    <source>
        <dbReference type="UniProtKB" id="Q920D5"/>
    </source>
</evidence>
<evidence type="ECO:0000255" key="3"/>
<evidence type="ECO:0000303" key="4">
    <source ref="1"/>
</evidence>
<evidence type="ECO:0000305" key="5"/>
<feature type="propeptide" id="PRO_0000317439" evidence="3">
    <location>
        <begin position="1"/>
        <end status="unknown"/>
    </location>
</feature>
<feature type="chain" id="PRO_0000317440" description="Caspase-12">
    <location>
        <begin status="unknown"/>
        <end position="386"/>
    </location>
</feature>
<feature type="domain" description="CARD">
    <location>
        <begin position="1"/>
        <end position="91"/>
    </location>
</feature>
<feature type="active site" evidence="1">
    <location>
        <position position="218"/>
    </location>
</feature>
<feature type="active site" evidence="1">
    <location>
        <position position="266"/>
    </location>
</feature>
<feature type="modified residue" description="Phosphoserine" evidence="2">
    <location>
        <position position="84"/>
    </location>
</feature>
<feature type="splice variant" id="VSP_030952" description="In isoform 2." evidence="4">
    <original>M</original>
    <variation>MAGKRQSQDPVNAIKVVASTMLNSFLEDLKEKNVLNKQELQTMGQTVNVITKKTENLVGDLTEKTQVVGKIFKDHFLNSGSLLSLKSHAENEDECSESSS</variation>
    <location>
        <position position="1"/>
    </location>
</feature>
<keyword id="KW-0025">Alternative splicing</keyword>
<keyword id="KW-0053">Apoptosis</keyword>
<keyword id="KW-0378">Hydrolase</keyword>
<keyword id="KW-0597">Phosphoprotein</keyword>
<keyword id="KW-0645">Protease</keyword>
<keyword id="KW-1185">Reference proteome</keyword>
<keyword id="KW-0788">Thiol protease</keyword>
<keyword id="KW-0865">Zymogen</keyword>
<reference key="1">
    <citation type="submission" date="2005-10" db="EMBL/GenBank/DDBJ databases">
        <title>Identification of dog caspase-12.</title>
        <authorList>
            <person name="Eckhart L."/>
            <person name="Uthman A."/>
            <person name="Sipos W."/>
            <person name="Tschachler E."/>
        </authorList>
    </citation>
    <scope>NUCLEOTIDE SEQUENCE [MRNA] (ISOFORMS 1 AND 2)</scope>
</reference>
<organism>
    <name type="scientific">Canis lupus familiaris</name>
    <name type="common">Dog</name>
    <name type="synonym">Canis familiaris</name>
    <dbReference type="NCBI Taxonomy" id="9615"/>
    <lineage>
        <taxon>Eukaryota</taxon>
        <taxon>Metazoa</taxon>
        <taxon>Chordata</taxon>
        <taxon>Craniata</taxon>
        <taxon>Vertebrata</taxon>
        <taxon>Euteleostomi</taxon>
        <taxon>Mammalia</taxon>
        <taxon>Eutheria</taxon>
        <taxon>Laurasiatheria</taxon>
        <taxon>Carnivora</taxon>
        <taxon>Caniformia</taxon>
        <taxon>Canidae</taxon>
        <taxon>Canis</taxon>
    </lineage>
</organism>
<accession>Q075B4</accession>
<accession>Q075B3</accession>
<protein>
    <recommendedName>
        <fullName>Caspase-12</fullName>
        <shortName>CASP-12</shortName>
        <ecNumber>3.4.22.-</ecNumber>
    </recommendedName>
</protein>
<sequence length="386" mass="44020">MAGKRQSQDPVNAIKVVASTMLNSFLEDLKEKNVLNKQELQTMGQTVNVITKKTENLVGDLTEKTQVVGKIFKDHFLNSGSLLSLKSHAENEDECSESSSAVLQEIQASQVKVRKLCPCDHSHEPKITNVHEIYPVMEKEGRTRLALIICNSEFDYLSKRQGSEIDILGMQDLLENLGYSVVVKENLSALEMKTELKNFAARQEHKFSDSTFLVFMSHGTLDGICGTKHRNEEPDILHDDTIFQIFNNRNCRSLKDKPKVIIMQACRGRGDGAVWVTDVGEASAWTCDQPLQCYIFNDAIEKTHVEKDFIAFKSSTPHNVSWRLNTDGSLFISHLIHYFREFSCCHHLEEIFRKVQNSFETPNTMIQMPTIERVSMTRYFYLFPGN</sequence>
<comment type="function">
    <text evidence="1">Involved in the activation cascade of caspases responsible for apoptosis execution.</text>
</comment>
<comment type="subunit">
    <text evidence="1 5">Heterotetramer that consists of two anti-parallel arranged heterodimers, each one formed by two subunits (Potential). May interact with TRAF2 (By similarity).</text>
</comment>
<comment type="alternative products">
    <event type="alternative splicing"/>
    <isoform>
        <id>Q075B4-1</id>
        <name>1</name>
        <name>B</name>
        <sequence type="displayed"/>
    </isoform>
    <isoform>
        <id>Q075B4-2</id>
        <name>2</name>
        <name>A</name>
        <sequence type="described" ref="VSP_030952"/>
    </isoform>
</comment>
<comment type="similarity">
    <text evidence="5">Belongs to the peptidase C14A family.</text>
</comment>
<name>CASPC_CANLF</name>
<proteinExistence type="evidence at transcript level"/>
<dbReference type="EC" id="3.4.22.-"/>
<dbReference type="EMBL" id="DQ228670">
    <property type="protein sequence ID" value="ABB58696.1"/>
    <property type="molecule type" value="mRNA"/>
</dbReference>
<dbReference type="EMBL" id="DQ228671">
    <property type="protein sequence ID" value="ABB58697.1"/>
    <property type="molecule type" value="mRNA"/>
</dbReference>
<dbReference type="RefSeq" id="NP_001070704.1">
    <molecule id="Q075B4-2"/>
    <property type="nucleotide sequence ID" value="NM_001077236.1"/>
</dbReference>
<dbReference type="SMR" id="Q075B4"/>
<dbReference type="FunCoup" id="Q075B4">
    <property type="interactions" value="221"/>
</dbReference>
<dbReference type="STRING" id="9615.ENSCAFP00000042646"/>
<dbReference type="PaxDb" id="9612-ENSCAFP00000038116"/>
<dbReference type="Ensembl" id="ENSCAFT00000046928.4">
    <molecule id="Q075B4-1"/>
    <property type="protein sequence ID" value="ENSCAFP00000038116.3"/>
    <property type="gene ID" value="ENSCAFG00000014864.6"/>
</dbReference>
<dbReference type="Ensembl" id="ENSCAFT00030017947.1">
    <molecule id="Q075B4-2"/>
    <property type="protein sequence ID" value="ENSCAFP00030015674.1"/>
    <property type="gene ID" value="ENSCAFG00030009693.1"/>
</dbReference>
<dbReference type="Ensembl" id="ENSCAFT00040027945.1">
    <molecule id="Q075B4-2"/>
    <property type="protein sequence ID" value="ENSCAFP00040024266.1"/>
    <property type="gene ID" value="ENSCAFG00040015183.1"/>
</dbReference>
<dbReference type="Ensembl" id="ENSCAFT00845000843.1">
    <molecule id="Q075B4-1"/>
    <property type="protein sequence ID" value="ENSCAFP00845000634.1"/>
    <property type="gene ID" value="ENSCAFG00845000482.1"/>
</dbReference>
<dbReference type="GeneID" id="479458"/>
<dbReference type="KEGG" id="cfa:479458"/>
<dbReference type="CTD" id="100506742"/>
<dbReference type="VEuPathDB" id="HostDB:ENSCAFG00845000482"/>
<dbReference type="eggNOG" id="KOG3573">
    <property type="taxonomic scope" value="Eukaryota"/>
</dbReference>
<dbReference type="GeneTree" id="ENSGT00940000162555"/>
<dbReference type="InParanoid" id="Q075B4"/>
<dbReference type="OrthoDB" id="25646at33554"/>
<dbReference type="Proteomes" id="UP000002254">
    <property type="component" value="Chromosome 5"/>
</dbReference>
<dbReference type="Proteomes" id="UP000694429">
    <property type="component" value="Chromosome 5"/>
</dbReference>
<dbReference type="Proteomes" id="UP000694542">
    <property type="component" value="Chromosome 5"/>
</dbReference>
<dbReference type="Proteomes" id="UP000805418">
    <property type="component" value="Chromosome 5"/>
</dbReference>
<dbReference type="Bgee" id="ENSCAFG00000014864">
    <property type="expression patterns" value="Expressed in retina and 45 other cell types or tissues"/>
</dbReference>
<dbReference type="GO" id="GO:0097169">
    <property type="term" value="C:AIM2 inflammasome complex"/>
    <property type="evidence" value="ECO:0000318"/>
    <property type="project" value="GO_Central"/>
</dbReference>
<dbReference type="GO" id="GO:0072557">
    <property type="term" value="C:IPAF inflammasome complex"/>
    <property type="evidence" value="ECO:0000318"/>
    <property type="project" value="GO_Central"/>
</dbReference>
<dbReference type="GO" id="GO:0072559">
    <property type="term" value="C:NLRP3 inflammasome complex"/>
    <property type="evidence" value="ECO:0000318"/>
    <property type="project" value="GO_Central"/>
</dbReference>
<dbReference type="GO" id="GO:0004197">
    <property type="term" value="F:cysteine-type endopeptidase activity"/>
    <property type="evidence" value="ECO:0007669"/>
    <property type="project" value="InterPro"/>
</dbReference>
<dbReference type="GO" id="GO:0006915">
    <property type="term" value="P:apoptotic process"/>
    <property type="evidence" value="ECO:0007669"/>
    <property type="project" value="UniProtKB-KW"/>
</dbReference>
<dbReference type="GO" id="GO:0006508">
    <property type="term" value="P:proteolysis"/>
    <property type="evidence" value="ECO:0007669"/>
    <property type="project" value="UniProtKB-KW"/>
</dbReference>
<dbReference type="GO" id="GO:0042981">
    <property type="term" value="P:regulation of apoptotic process"/>
    <property type="evidence" value="ECO:0007669"/>
    <property type="project" value="InterPro"/>
</dbReference>
<dbReference type="GO" id="GO:0050727">
    <property type="term" value="P:regulation of inflammatory response"/>
    <property type="evidence" value="ECO:0000318"/>
    <property type="project" value="GO_Central"/>
</dbReference>
<dbReference type="CDD" id="cd08325">
    <property type="entry name" value="CARD_CASP1-like"/>
    <property type="match status" value="1"/>
</dbReference>
<dbReference type="CDD" id="cd00032">
    <property type="entry name" value="CASc"/>
    <property type="match status" value="1"/>
</dbReference>
<dbReference type="FunFam" id="3.30.70.1470:FF:000003">
    <property type="entry name" value="Caspase-1"/>
    <property type="match status" value="1"/>
</dbReference>
<dbReference type="FunFam" id="3.40.50.1460:FF:000007">
    <property type="entry name" value="Caspase-1"/>
    <property type="match status" value="1"/>
</dbReference>
<dbReference type="Gene3D" id="3.40.50.1460">
    <property type="match status" value="1"/>
</dbReference>
<dbReference type="Gene3D" id="3.30.70.1470">
    <property type="entry name" value="Caspase-like"/>
    <property type="match status" value="1"/>
</dbReference>
<dbReference type="InterPro" id="IPR001315">
    <property type="entry name" value="CARD"/>
</dbReference>
<dbReference type="InterPro" id="IPR029030">
    <property type="entry name" value="Caspase-like_dom_sf"/>
</dbReference>
<dbReference type="InterPro" id="IPR033139">
    <property type="entry name" value="Caspase_cys_AS"/>
</dbReference>
<dbReference type="InterPro" id="IPR016129">
    <property type="entry name" value="Caspase_his_AS"/>
</dbReference>
<dbReference type="InterPro" id="IPR002398">
    <property type="entry name" value="Pept_C14"/>
</dbReference>
<dbReference type="InterPro" id="IPR011600">
    <property type="entry name" value="Pept_C14_caspase"/>
</dbReference>
<dbReference type="InterPro" id="IPR002138">
    <property type="entry name" value="Pept_C14_p10"/>
</dbReference>
<dbReference type="InterPro" id="IPR001309">
    <property type="entry name" value="Pept_C14_p20"/>
</dbReference>
<dbReference type="InterPro" id="IPR015917">
    <property type="entry name" value="Pept_C14A"/>
</dbReference>
<dbReference type="PANTHER" id="PTHR47901">
    <property type="entry name" value="CASPASE RECRUITMENT DOMAIN-CONTAINING PROTEIN 18"/>
    <property type="match status" value="1"/>
</dbReference>
<dbReference type="PANTHER" id="PTHR47901:SF6">
    <property type="entry name" value="CASPASE-12"/>
    <property type="match status" value="1"/>
</dbReference>
<dbReference type="Pfam" id="PF00619">
    <property type="entry name" value="CARD"/>
    <property type="match status" value="1"/>
</dbReference>
<dbReference type="Pfam" id="PF00656">
    <property type="entry name" value="Peptidase_C14"/>
    <property type="match status" value="1"/>
</dbReference>
<dbReference type="PIRSF" id="PIRSF038001">
    <property type="entry name" value="Caspase_ICE"/>
    <property type="match status" value="1"/>
</dbReference>
<dbReference type="PRINTS" id="PR00376">
    <property type="entry name" value="IL1BCENZYME"/>
</dbReference>
<dbReference type="SMART" id="SM00115">
    <property type="entry name" value="CASc"/>
    <property type="match status" value="1"/>
</dbReference>
<dbReference type="SUPFAM" id="SSF52129">
    <property type="entry name" value="Caspase-like"/>
    <property type="match status" value="1"/>
</dbReference>
<dbReference type="PROSITE" id="PS01122">
    <property type="entry name" value="CASPASE_CYS"/>
    <property type="match status" value="1"/>
</dbReference>
<dbReference type="PROSITE" id="PS01121">
    <property type="entry name" value="CASPASE_HIS"/>
    <property type="match status" value="1"/>
</dbReference>
<dbReference type="PROSITE" id="PS50207">
    <property type="entry name" value="CASPASE_P10"/>
    <property type="match status" value="1"/>
</dbReference>
<dbReference type="PROSITE" id="PS50208">
    <property type="entry name" value="CASPASE_P20"/>
    <property type="match status" value="1"/>
</dbReference>